<proteinExistence type="evidence at transcript level"/>
<feature type="chain" id="PRO_0000084416" description="Protein LiaI">
    <location>
        <begin position="1"/>
        <end position="126"/>
    </location>
</feature>
<feature type="transmembrane region" description="Helical" evidence="1">
    <location>
        <begin position="11"/>
        <end position="31"/>
    </location>
</feature>
<feature type="transmembrane region" description="Helical" evidence="1">
    <location>
        <begin position="56"/>
        <end position="76"/>
    </location>
</feature>
<comment type="subcellular location">
    <subcellularLocation>
        <location evidence="7">Cell membrane</location>
        <topology evidence="7">Multi-pass membrane protein</topology>
    </subcellularLocation>
</comment>
<comment type="induction">
    <text evidence="2 3 4 5 6">Induced, via the two-component regulatory system LiaS/LiaR, by antibiotics (vancomycin, bacitracin, nisin and ramoplanin), cationic antimicrobial peptides (human LL-37 and porcine PG-1), Triton X-100 and severe secretion stress.</text>
</comment>
<sequence>MKINKKTIGGFLLIVFGISVFFGGGSFGFIIPLAIGSLMTYAGIKRFAAGKTITGIIVGGIGAIMLICSLPFVVGIALAAAMVYYGWKLMKNGSADNGVSSFDPEPASAAYQSHFDDEWEEFLKKK</sequence>
<reference key="1">
    <citation type="journal article" date="1998" name="Microbiology">
        <title>The yvsA-yvqA (293 degrees - 289 degrees) region of the Bacillus subtilis chromosome containing genes involved in metal ion uptake and a putative sigma factor.</title>
        <authorList>
            <person name="Wipat A."/>
            <person name="Brignell C.S."/>
            <person name="Guy J.B."/>
            <person name="Rose M."/>
            <person name="Emmerson P.T."/>
            <person name="Harwood C.R."/>
        </authorList>
    </citation>
    <scope>NUCLEOTIDE SEQUENCE [GENOMIC DNA]</scope>
    <source>
        <strain>168</strain>
    </source>
</reference>
<reference key="2">
    <citation type="journal article" date="1997" name="Nature">
        <title>The complete genome sequence of the Gram-positive bacterium Bacillus subtilis.</title>
        <authorList>
            <person name="Kunst F."/>
            <person name="Ogasawara N."/>
            <person name="Moszer I."/>
            <person name="Albertini A.M."/>
            <person name="Alloni G."/>
            <person name="Azevedo V."/>
            <person name="Bertero M.G."/>
            <person name="Bessieres P."/>
            <person name="Bolotin A."/>
            <person name="Borchert S."/>
            <person name="Borriss R."/>
            <person name="Boursier L."/>
            <person name="Brans A."/>
            <person name="Braun M."/>
            <person name="Brignell S.C."/>
            <person name="Bron S."/>
            <person name="Brouillet S."/>
            <person name="Bruschi C.V."/>
            <person name="Caldwell B."/>
            <person name="Capuano V."/>
            <person name="Carter N.M."/>
            <person name="Choi S.-K."/>
            <person name="Codani J.-J."/>
            <person name="Connerton I.F."/>
            <person name="Cummings N.J."/>
            <person name="Daniel R.A."/>
            <person name="Denizot F."/>
            <person name="Devine K.M."/>
            <person name="Duesterhoeft A."/>
            <person name="Ehrlich S.D."/>
            <person name="Emmerson P.T."/>
            <person name="Entian K.-D."/>
            <person name="Errington J."/>
            <person name="Fabret C."/>
            <person name="Ferrari E."/>
            <person name="Foulger D."/>
            <person name="Fritz C."/>
            <person name="Fujita M."/>
            <person name="Fujita Y."/>
            <person name="Fuma S."/>
            <person name="Galizzi A."/>
            <person name="Galleron N."/>
            <person name="Ghim S.-Y."/>
            <person name="Glaser P."/>
            <person name="Goffeau A."/>
            <person name="Golightly E.J."/>
            <person name="Grandi G."/>
            <person name="Guiseppi G."/>
            <person name="Guy B.J."/>
            <person name="Haga K."/>
            <person name="Haiech J."/>
            <person name="Harwood C.R."/>
            <person name="Henaut A."/>
            <person name="Hilbert H."/>
            <person name="Holsappel S."/>
            <person name="Hosono S."/>
            <person name="Hullo M.-F."/>
            <person name="Itaya M."/>
            <person name="Jones L.-M."/>
            <person name="Joris B."/>
            <person name="Karamata D."/>
            <person name="Kasahara Y."/>
            <person name="Klaerr-Blanchard M."/>
            <person name="Klein C."/>
            <person name="Kobayashi Y."/>
            <person name="Koetter P."/>
            <person name="Koningstein G."/>
            <person name="Krogh S."/>
            <person name="Kumano M."/>
            <person name="Kurita K."/>
            <person name="Lapidus A."/>
            <person name="Lardinois S."/>
            <person name="Lauber J."/>
            <person name="Lazarevic V."/>
            <person name="Lee S.-M."/>
            <person name="Levine A."/>
            <person name="Liu H."/>
            <person name="Masuda S."/>
            <person name="Mauel C."/>
            <person name="Medigue C."/>
            <person name="Medina N."/>
            <person name="Mellado R.P."/>
            <person name="Mizuno M."/>
            <person name="Moestl D."/>
            <person name="Nakai S."/>
            <person name="Noback M."/>
            <person name="Noone D."/>
            <person name="O'Reilly M."/>
            <person name="Ogawa K."/>
            <person name="Ogiwara A."/>
            <person name="Oudega B."/>
            <person name="Park S.-H."/>
            <person name="Parro V."/>
            <person name="Pohl T.M."/>
            <person name="Portetelle D."/>
            <person name="Porwollik S."/>
            <person name="Prescott A.M."/>
            <person name="Presecan E."/>
            <person name="Pujic P."/>
            <person name="Purnelle B."/>
            <person name="Rapoport G."/>
            <person name="Rey M."/>
            <person name="Reynolds S."/>
            <person name="Rieger M."/>
            <person name="Rivolta C."/>
            <person name="Rocha E."/>
            <person name="Roche B."/>
            <person name="Rose M."/>
            <person name="Sadaie Y."/>
            <person name="Sato T."/>
            <person name="Scanlan E."/>
            <person name="Schleich S."/>
            <person name="Schroeter R."/>
            <person name="Scoffone F."/>
            <person name="Sekiguchi J."/>
            <person name="Sekowska A."/>
            <person name="Seror S.J."/>
            <person name="Serror P."/>
            <person name="Shin B.-S."/>
            <person name="Soldo B."/>
            <person name="Sorokin A."/>
            <person name="Tacconi E."/>
            <person name="Takagi T."/>
            <person name="Takahashi H."/>
            <person name="Takemaru K."/>
            <person name="Takeuchi M."/>
            <person name="Tamakoshi A."/>
            <person name="Tanaka T."/>
            <person name="Terpstra P."/>
            <person name="Tognoni A."/>
            <person name="Tosato V."/>
            <person name="Uchiyama S."/>
            <person name="Vandenbol M."/>
            <person name="Vannier F."/>
            <person name="Vassarotti A."/>
            <person name="Viari A."/>
            <person name="Wambutt R."/>
            <person name="Wedler E."/>
            <person name="Wedler H."/>
            <person name="Weitzenegger T."/>
            <person name="Winters P."/>
            <person name="Wipat A."/>
            <person name="Yamamoto H."/>
            <person name="Yamane K."/>
            <person name="Yasumoto K."/>
            <person name="Yata K."/>
            <person name="Yoshida K."/>
            <person name="Yoshikawa H.-F."/>
            <person name="Zumstein E."/>
            <person name="Yoshikawa H."/>
            <person name="Danchin A."/>
        </authorList>
    </citation>
    <scope>NUCLEOTIDE SEQUENCE [LARGE SCALE GENOMIC DNA]</scope>
    <source>
        <strain>168</strain>
    </source>
</reference>
<reference key="3">
    <citation type="journal article" date="2002" name="Mol. Microbiol.">
        <title>Antibiotics that inhibit cell wall biosynthesis induce expression of the Bacillus subtilis sigma(W) and sigma(M) regulons.</title>
        <authorList>
            <person name="Cao M."/>
            <person name="Wang T."/>
            <person name="Ye R."/>
            <person name="Helmann J.D."/>
        </authorList>
    </citation>
    <scope>INDUCTION BY VANCOMYCIN</scope>
    <source>
        <strain>168 / CU1065</strain>
    </source>
</reference>
<reference key="4">
    <citation type="journal article" date="2003" name="Mol. Microbiol.">
        <title>Cell wall stress responses in Bacillus subtilis: the regulatory network of the bacitracin stimulon.</title>
        <authorList>
            <person name="Mascher T."/>
            <person name="Margulis N.G."/>
            <person name="Wang T."/>
            <person name="Ye R.W."/>
            <person name="Helmann J.D."/>
        </authorList>
    </citation>
    <scope>INDUCTION BY BACITRACIN</scope>
    <source>
        <strain>168 / CU1065</strain>
    </source>
</reference>
<reference key="5">
    <citation type="journal article" date="2004" name="Antimicrob. Agents Chemother.">
        <title>Antibiotic-inducible promoter regulated by the cell envelope stress-sensing two-component system LiaRS of Bacillus subtilis.</title>
        <authorList>
            <person name="Mascher T."/>
            <person name="Zimmer S.L."/>
            <person name="Smith T.-A."/>
            <person name="Helmann J.D."/>
        </authorList>
    </citation>
    <scope>INDUCTION BY ANTIBIOTICS</scope>
</reference>
<reference key="6">
    <citation type="journal article" date="2005" name="Appl. Microbiol. Biotechnol.">
        <title>Transcriptome analysis of the secretion stress response of Bacillus subtilis.</title>
        <authorList>
            <person name="Hyyrylaeinen H.-L."/>
            <person name="Sarvas M."/>
            <person name="Kontinen V.P."/>
        </authorList>
    </citation>
    <scope>INDUCTION BY STRESS</scope>
</reference>
<reference key="7">
    <citation type="journal article" date="2005" name="Microbiology">
        <title>Cationic antimicrobial peptides elicit a complex stress response in Bacillus subtilis that involves ECF-type sigma factors and two-component signal transduction systems.</title>
        <authorList>
            <person name="Pietiaeinen M."/>
            <person name="Gardemeister M."/>
            <person name="Mecklin M."/>
            <person name="Leskelae S."/>
            <person name="Sarvas M."/>
            <person name="Kontinen V.P."/>
        </authorList>
    </citation>
    <scope>INDUCTION BY LL-37; PG-1 AND TRITON X-100</scope>
    <source>
        <strain>168</strain>
    </source>
</reference>
<name>LIAI_BACSU</name>
<protein>
    <recommendedName>
        <fullName>Protein LiaI</fullName>
    </recommendedName>
</protein>
<evidence type="ECO:0000255" key="1"/>
<evidence type="ECO:0000269" key="2">
    <source>
    </source>
</evidence>
<evidence type="ECO:0000269" key="3">
    <source>
    </source>
</evidence>
<evidence type="ECO:0000269" key="4">
    <source>
    </source>
</evidence>
<evidence type="ECO:0000269" key="5">
    <source>
    </source>
</evidence>
<evidence type="ECO:0000269" key="6">
    <source>
    </source>
</evidence>
<evidence type="ECO:0000305" key="7"/>
<dbReference type="EMBL" id="AJ223978">
    <property type="protein sequence ID" value="CAA11740.1"/>
    <property type="molecule type" value="Genomic_DNA"/>
</dbReference>
<dbReference type="EMBL" id="AL009126">
    <property type="protein sequence ID" value="CAB15303.1"/>
    <property type="molecule type" value="Genomic_DNA"/>
</dbReference>
<dbReference type="PIR" id="B70046">
    <property type="entry name" value="B70046"/>
</dbReference>
<dbReference type="RefSeq" id="NP_391193.1">
    <property type="nucleotide sequence ID" value="NC_000964.3"/>
</dbReference>
<dbReference type="RefSeq" id="WP_003243447.1">
    <property type="nucleotide sequence ID" value="NZ_OZ025638.1"/>
</dbReference>
<dbReference type="FunCoup" id="O32202">
    <property type="interactions" value="127"/>
</dbReference>
<dbReference type="STRING" id="224308.BSU33130"/>
<dbReference type="PaxDb" id="224308-BSU33130"/>
<dbReference type="EnsemblBacteria" id="CAB15303">
    <property type="protein sequence ID" value="CAB15303"/>
    <property type="gene ID" value="BSU_33130"/>
</dbReference>
<dbReference type="GeneID" id="935958"/>
<dbReference type="KEGG" id="bsu:BSU33130"/>
<dbReference type="PATRIC" id="fig|224308.179.peg.3591"/>
<dbReference type="eggNOG" id="COG4758">
    <property type="taxonomic scope" value="Bacteria"/>
</dbReference>
<dbReference type="InParanoid" id="O32202"/>
<dbReference type="OrthoDB" id="2942803at2"/>
<dbReference type="BioCyc" id="BSUB:BSU33130-MONOMER"/>
<dbReference type="Proteomes" id="UP000001570">
    <property type="component" value="Chromosome"/>
</dbReference>
<dbReference type="GO" id="GO:0005886">
    <property type="term" value="C:plasma membrane"/>
    <property type="evidence" value="ECO:0007669"/>
    <property type="project" value="UniProtKB-SubCell"/>
</dbReference>
<accession>O32202</accession>
<keyword id="KW-1003">Cell membrane</keyword>
<keyword id="KW-0472">Membrane</keyword>
<keyword id="KW-1185">Reference proteome</keyword>
<keyword id="KW-0812">Transmembrane</keyword>
<keyword id="KW-1133">Transmembrane helix</keyword>
<organism>
    <name type="scientific">Bacillus subtilis (strain 168)</name>
    <dbReference type="NCBI Taxonomy" id="224308"/>
    <lineage>
        <taxon>Bacteria</taxon>
        <taxon>Bacillati</taxon>
        <taxon>Bacillota</taxon>
        <taxon>Bacilli</taxon>
        <taxon>Bacillales</taxon>
        <taxon>Bacillaceae</taxon>
        <taxon>Bacillus</taxon>
    </lineage>
</organism>
<gene>
    <name type="primary">liaI</name>
    <name type="synonym">yvqI</name>
    <name type="ordered locus">BSU33130</name>
</gene>